<accession>Q9SAH9</accession>
<accession>Q8LBL0</accession>
<accession>Q9C5Y1</accession>
<gene>
    <name type="primary">CCR2</name>
    <name type="ordered locus">At1g80820</name>
    <name type="ORF">F23A5.17</name>
</gene>
<evidence type="ECO:0000250" key="1">
    <source>
        <dbReference type="UniProtKB" id="A0A059TC02"/>
    </source>
</evidence>
<evidence type="ECO:0000250" key="2">
    <source>
        <dbReference type="UniProtKB" id="P51110"/>
    </source>
</evidence>
<evidence type="ECO:0000250" key="3">
    <source>
        <dbReference type="UniProtKB" id="Q12068"/>
    </source>
</evidence>
<evidence type="ECO:0000269" key="4">
    <source>
    </source>
</evidence>
<evidence type="ECO:0000305" key="5"/>
<feature type="chain" id="PRO_0000418213" description="Cinnamoyl-CoA reductase 2">
    <location>
        <begin position="1"/>
        <end position="332"/>
    </location>
</feature>
<feature type="active site" description="Proton donor" evidence="3">
    <location>
        <position position="160"/>
    </location>
</feature>
<feature type="binding site" evidence="2">
    <location>
        <begin position="12"/>
        <end position="18"/>
    </location>
    <ligand>
        <name>NADP(+)</name>
        <dbReference type="ChEBI" id="CHEBI:58349"/>
    </ligand>
</feature>
<feature type="binding site" evidence="2">
    <location>
        <position position="37"/>
    </location>
    <ligand>
        <name>NADP(+)</name>
        <dbReference type="ChEBI" id="CHEBI:58349"/>
    </ligand>
</feature>
<feature type="binding site" evidence="1">
    <location>
        <position position="43"/>
    </location>
    <ligand>
        <name>NADP(+)</name>
        <dbReference type="ChEBI" id="CHEBI:58349"/>
    </ligand>
</feature>
<feature type="binding site" evidence="2">
    <location>
        <begin position="63"/>
        <end position="64"/>
    </location>
    <ligand>
        <name>NADP(+)</name>
        <dbReference type="ChEBI" id="CHEBI:58349"/>
    </ligand>
</feature>
<feature type="binding site" evidence="2">
    <location>
        <begin position="83"/>
        <end position="85"/>
    </location>
    <ligand>
        <name>NADP(+)</name>
        <dbReference type="ChEBI" id="CHEBI:58349"/>
    </ligand>
</feature>
<feature type="binding site" evidence="1">
    <location>
        <position position="156"/>
    </location>
    <ligand>
        <name>NADP(+)</name>
        <dbReference type="ChEBI" id="CHEBI:58349"/>
    </ligand>
</feature>
<feature type="binding site" evidence="2">
    <location>
        <position position="160"/>
    </location>
    <ligand>
        <name>NADP(+)</name>
        <dbReference type="ChEBI" id="CHEBI:58349"/>
    </ligand>
</feature>
<feature type="binding site" evidence="2">
    <location>
        <begin position="183"/>
        <end position="186"/>
    </location>
    <ligand>
        <name>NADP(+)</name>
        <dbReference type="ChEBI" id="CHEBI:58349"/>
    </ligand>
</feature>
<feature type="binding site" evidence="2">
    <location>
        <position position="198"/>
    </location>
    <ligand>
        <name>NADP(+)</name>
        <dbReference type="ChEBI" id="CHEBI:58349"/>
    </ligand>
</feature>
<feature type="disulfide bond" evidence="1">
    <location>
        <begin position="149"/>
        <end position="157"/>
    </location>
</feature>
<feature type="sequence conflict" description="In Ref. 6; AAM64706." evidence="5" ref="6">
    <original>L</original>
    <variation>P</variation>
    <location>
        <position position="2"/>
    </location>
</feature>
<feature type="sequence conflict" description="In Ref. 6; AAM64706." evidence="5" ref="6">
    <original>T</original>
    <variation>A</variation>
    <location>
        <position position="73"/>
    </location>
</feature>
<feature type="sequence conflict" description="In Ref. 1; AAG53687." evidence="5" ref="1">
    <original>L</original>
    <variation>F</variation>
    <location>
        <position position="245"/>
    </location>
</feature>
<feature type="sequence conflict" description="In Ref. 1; AAG53687." evidence="5" ref="1">
    <original>H</original>
    <variation>D</variation>
    <location>
        <position position="251"/>
    </location>
</feature>
<feature type="sequence conflict" description="In Ref. 6; AAM64706." evidence="5" ref="6">
    <original>S</original>
    <variation>Y</variation>
    <location>
        <position position="307"/>
    </location>
</feature>
<feature type="sequence conflict" description="In Ref. 6; AAM64706." evidence="5" ref="6">
    <original>S</original>
    <variation>P</variation>
    <location>
        <position position="332"/>
    </location>
</feature>
<name>CCR2_ARATH</name>
<proteinExistence type="evidence at protein level"/>
<reference key="1">
    <citation type="journal article" date="2001" name="Phytochemistry">
        <title>Two cinnamoyl-CoA reductase (CCR) genes from Arabidopsis thaliana are differentially expressed during development and in response to infection with pathogenic bacteria.</title>
        <authorList>
            <person name="Lauvergeat V."/>
            <person name="Lacomme C."/>
            <person name="Lacombe E."/>
            <person name="Lasserre E."/>
            <person name="Roby D."/>
            <person name="Grima-Pettenati J."/>
        </authorList>
    </citation>
    <scope>NUCLEOTIDE SEQUENCE [MRNA]</scope>
    <scope>FUNCTION</scope>
    <scope>CATALYTIC ACTIVITY</scope>
    <scope>BIOPHYSICOCHEMICAL PROPERTIES</scope>
    <scope>TISSUE SPECIFICITY</scope>
    <scope>INDUCTION</scope>
    <source>
        <tissue>Seedling</tissue>
    </source>
</reference>
<reference key="2">
    <citation type="journal article" date="2000" name="Nature">
        <title>Sequence and analysis of chromosome 1 of the plant Arabidopsis thaliana.</title>
        <authorList>
            <person name="Theologis A."/>
            <person name="Ecker J.R."/>
            <person name="Palm C.J."/>
            <person name="Federspiel N.A."/>
            <person name="Kaul S."/>
            <person name="White O."/>
            <person name="Alonso J."/>
            <person name="Altafi H."/>
            <person name="Araujo R."/>
            <person name="Bowman C.L."/>
            <person name="Brooks S.Y."/>
            <person name="Buehler E."/>
            <person name="Chan A."/>
            <person name="Chao Q."/>
            <person name="Chen H."/>
            <person name="Cheuk R.F."/>
            <person name="Chin C.W."/>
            <person name="Chung M.K."/>
            <person name="Conn L."/>
            <person name="Conway A.B."/>
            <person name="Conway A.R."/>
            <person name="Creasy T.H."/>
            <person name="Dewar K."/>
            <person name="Dunn P."/>
            <person name="Etgu P."/>
            <person name="Feldblyum T.V."/>
            <person name="Feng J.-D."/>
            <person name="Fong B."/>
            <person name="Fujii C.Y."/>
            <person name="Gill J.E."/>
            <person name="Goldsmith A.D."/>
            <person name="Haas B."/>
            <person name="Hansen N.F."/>
            <person name="Hughes B."/>
            <person name="Huizar L."/>
            <person name="Hunter J.L."/>
            <person name="Jenkins J."/>
            <person name="Johnson-Hopson C."/>
            <person name="Khan S."/>
            <person name="Khaykin E."/>
            <person name="Kim C.J."/>
            <person name="Koo H.L."/>
            <person name="Kremenetskaia I."/>
            <person name="Kurtz D.B."/>
            <person name="Kwan A."/>
            <person name="Lam B."/>
            <person name="Langin-Hooper S."/>
            <person name="Lee A."/>
            <person name="Lee J.M."/>
            <person name="Lenz C.A."/>
            <person name="Li J.H."/>
            <person name="Li Y.-P."/>
            <person name="Lin X."/>
            <person name="Liu S.X."/>
            <person name="Liu Z.A."/>
            <person name="Luros J.S."/>
            <person name="Maiti R."/>
            <person name="Marziali A."/>
            <person name="Militscher J."/>
            <person name="Miranda M."/>
            <person name="Nguyen M."/>
            <person name="Nierman W.C."/>
            <person name="Osborne B.I."/>
            <person name="Pai G."/>
            <person name="Peterson J."/>
            <person name="Pham P.K."/>
            <person name="Rizzo M."/>
            <person name="Rooney T."/>
            <person name="Rowley D."/>
            <person name="Sakano H."/>
            <person name="Salzberg S.L."/>
            <person name="Schwartz J.R."/>
            <person name="Shinn P."/>
            <person name="Southwick A.M."/>
            <person name="Sun H."/>
            <person name="Tallon L.J."/>
            <person name="Tambunga G."/>
            <person name="Toriumi M.J."/>
            <person name="Town C.D."/>
            <person name="Utterback T."/>
            <person name="Van Aken S."/>
            <person name="Vaysberg M."/>
            <person name="Vysotskaia V.S."/>
            <person name="Walker M."/>
            <person name="Wu D."/>
            <person name="Yu G."/>
            <person name="Fraser C.M."/>
            <person name="Venter J.C."/>
            <person name="Davis R.W."/>
        </authorList>
    </citation>
    <scope>NUCLEOTIDE SEQUENCE [LARGE SCALE GENOMIC DNA]</scope>
    <source>
        <strain>cv. Columbia</strain>
    </source>
</reference>
<reference key="3">
    <citation type="journal article" date="2017" name="Plant J.">
        <title>Araport11: a complete reannotation of the Arabidopsis thaliana reference genome.</title>
        <authorList>
            <person name="Cheng C.Y."/>
            <person name="Krishnakumar V."/>
            <person name="Chan A.P."/>
            <person name="Thibaud-Nissen F."/>
            <person name="Schobel S."/>
            <person name="Town C.D."/>
        </authorList>
    </citation>
    <scope>GENOME REANNOTATION</scope>
    <source>
        <strain>cv. Columbia</strain>
    </source>
</reference>
<reference key="4">
    <citation type="journal article" date="2003" name="Science">
        <title>Empirical analysis of transcriptional activity in the Arabidopsis genome.</title>
        <authorList>
            <person name="Yamada K."/>
            <person name="Lim J."/>
            <person name="Dale J.M."/>
            <person name="Chen H."/>
            <person name="Shinn P."/>
            <person name="Palm C.J."/>
            <person name="Southwick A.M."/>
            <person name="Wu H.C."/>
            <person name="Kim C.J."/>
            <person name="Nguyen M."/>
            <person name="Pham P.K."/>
            <person name="Cheuk R.F."/>
            <person name="Karlin-Newmann G."/>
            <person name="Liu S.X."/>
            <person name="Lam B."/>
            <person name="Sakano H."/>
            <person name="Wu T."/>
            <person name="Yu G."/>
            <person name="Miranda M."/>
            <person name="Quach H.L."/>
            <person name="Tripp M."/>
            <person name="Chang C.H."/>
            <person name="Lee J.M."/>
            <person name="Toriumi M.J."/>
            <person name="Chan M.M."/>
            <person name="Tang C.C."/>
            <person name="Onodera C.S."/>
            <person name="Deng J.M."/>
            <person name="Akiyama K."/>
            <person name="Ansari Y."/>
            <person name="Arakawa T."/>
            <person name="Banh J."/>
            <person name="Banno F."/>
            <person name="Bowser L."/>
            <person name="Brooks S.Y."/>
            <person name="Carninci P."/>
            <person name="Chao Q."/>
            <person name="Choy N."/>
            <person name="Enju A."/>
            <person name="Goldsmith A.D."/>
            <person name="Gurjal M."/>
            <person name="Hansen N.F."/>
            <person name="Hayashizaki Y."/>
            <person name="Johnson-Hopson C."/>
            <person name="Hsuan V.W."/>
            <person name="Iida K."/>
            <person name="Karnes M."/>
            <person name="Khan S."/>
            <person name="Koesema E."/>
            <person name="Ishida J."/>
            <person name="Jiang P.X."/>
            <person name="Jones T."/>
            <person name="Kawai J."/>
            <person name="Kamiya A."/>
            <person name="Meyers C."/>
            <person name="Nakajima M."/>
            <person name="Narusaka M."/>
            <person name="Seki M."/>
            <person name="Sakurai T."/>
            <person name="Satou M."/>
            <person name="Tamse R."/>
            <person name="Vaysberg M."/>
            <person name="Wallender E.K."/>
            <person name="Wong C."/>
            <person name="Yamamura Y."/>
            <person name="Yuan S."/>
            <person name="Shinozaki K."/>
            <person name="Davis R.W."/>
            <person name="Theologis A."/>
            <person name="Ecker J.R."/>
        </authorList>
    </citation>
    <scope>NUCLEOTIDE SEQUENCE [LARGE SCALE MRNA]</scope>
    <source>
        <strain>cv. Columbia</strain>
    </source>
</reference>
<reference key="5">
    <citation type="submission" date="2006-07" db="EMBL/GenBank/DDBJ databases">
        <title>Large-scale analysis of RIKEN Arabidopsis full-length (RAFL) cDNAs.</title>
        <authorList>
            <person name="Totoki Y."/>
            <person name="Seki M."/>
            <person name="Ishida J."/>
            <person name="Nakajima M."/>
            <person name="Enju A."/>
            <person name="Kamiya A."/>
            <person name="Narusaka M."/>
            <person name="Shin-i T."/>
            <person name="Nakagawa M."/>
            <person name="Sakamoto N."/>
            <person name="Oishi K."/>
            <person name="Kohara Y."/>
            <person name="Kobayashi M."/>
            <person name="Toyoda A."/>
            <person name="Sakaki Y."/>
            <person name="Sakurai T."/>
            <person name="Iida K."/>
            <person name="Akiyama K."/>
            <person name="Satou M."/>
            <person name="Toyoda T."/>
            <person name="Konagaya A."/>
            <person name="Carninci P."/>
            <person name="Kawai J."/>
            <person name="Hayashizaki Y."/>
            <person name="Shinozaki K."/>
        </authorList>
    </citation>
    <scope>NUCLEOTIDE SEQUENCE [LARGE SCALE MRNA]</scope>
    <source>
        <strain>cv. Columbia</strain>
    </source>
</reference>
<reference key="6">
    <citation type="submission" date="2002-03" db="EMBL/GenBank/DDBJ databases">
        <title>Full-length cDNA from Arabidopsis thaliana.</title>
        <authorList>
            <person name="Brover V.V."/>
            <person name="Troukhan M.E."/>
            <person name="Alexandrov N.A."/>
            <person name="Lu Y.-P."/>
            <person name="Flavell R.B."/>
            <person name="Feldmann K.A."/>
        </authorList>
    </citation>
    <scope>NUCLEOTIDE SEQUENCE [LARGE SCALE MRNA]</scope>
</reference>
<comment type="function">
    <text evidence="4">Cinnamoyl-CoA reductase probably involved in the formation of phenolic compounds associated with the hypersensitive response. Seems not to be involved in lignin biosynthesis.</text>
</comment>
<comment type="catalytic activity">
    <reaction evidence="4">
        <text>(E)-cinnamaldehyde + NADP(+) + CoA = (E)-cinnamoyl-CoA + NADPH + H(+)</text>
        <dbReference type="Rhea" id="RHEA:10620"/>
        <dbReference type="ChEBI" id="CHEBI:15378"/>
        <dbReference type="ChEBI" id="CHEBI:16731"/>
        <dbReference type="ChEBI" id="CHEBI:57252"/>
        <dbReference type="ChEBI" id="CHEBI:57287"/>
        <dbReference type="ChEBI" id="CHEBI:57783"/>
        <dbReference type="ChEBI" id="CHEBI:58349"/>
        <dbReference type="EC" id="1.2.1.44"/>
    </reaction>
</comment>
<comment type="biophysicochemical properties">
    <kinetics>
        <KM evidence="4">4.7 uM for feruloyl-CoA</KM>
        <KM evidence="4">30.7 uM for sinapoyl-CoA</KM>
        <KM evidence="4">5.16 uM for caffeoyl-CoA</KM>
    </kinetics>
</comment>
<comment type="pathway">
    <text>Aromatic compound metabolism; phenylpropanoid biosynthesis.</text>
</comment>
<comment type="tissue specificity">
    <text evidence="4">Expressed at low levels in leaves, stems and flowers.</text>
</comment>
<comment type="induction">
    <text evidence="4">By the bacterial pathogen X.campestris.</text>
</comment>
<comment type="similarity">
    <text evidence="5">Belongs to the NAD(P)-dependent epimerase/dehydratase family. Dihydroflavonol-4-reductase subfamily.</text>
</comment>
<organism>
    <name type="scientific">Arabidopsis thaliana</name>
    <name type="common">Mouse-ear cress</name>
    <dbReference type="NCBI Taxonomy" id="3702"/>
    <lineage>
        <taxon>Eukaryota</taxon>
        <taxon>Viridiplantae</taxon>
        <taxon>Streptophyta</taxon>
        <taxon>Embryophyta</taxon>
        <taxon>Tracheophyta</taxon>
        <taxon>Spermatophyta</taxon>
        <taxon>Magnoliopsida</taxon>
        <taxon>eudicotyledons</taxon>
        <taxon>Gunneridae</taxon>
        <taxon>Pentapetalae</taxon>
        <taxon>rosids</taxon>
        <taxon>malvids</taxon>
        <taxon>Brassicales</taxon>
        <taxon>Brassicaceae</taxon>
        <taxon>Camelineae</taxon>
        <taxon>Arabidopsis</taxon>
    </lineage>
</organism>
<protein>
    <recommendedName>
        <fullName>Cinnamoyl-CoA reductase 2</fullName>
        <shortName>AtCCR2</shortName>
        <ecNumber>1.2.1.44</ecNumber>
    </recommendedName>
</protein>
<sequence>MLVDGKLVCVTGAGGYIASWIVKLLLERGYTVRGTVRNPTDPKNNHLRELQGAKERLTLHSADLLDYEALCATIDGCDGVFHTASPMTDDPETMLEPAVNGAKFVIDAAAKAKVKRVVFTSSIGAVYMNPNRDTQAIVDENCWSDLDFCKNTKNWYCYGKMLAEQSAWETAKAKGVDLVVLNPVLVLGPPLQSAINASLVHILKYLTGSAKTYANLTQVYVDVRDVALGHVLVYEAPSASGRYILAETALHRGEVVEILAKFFPEYPLPTKCSDEKNPRAKPYKFTTQKIKDLGLEFKPIKQSLYESVKSLQEKGHLPLPQDSNQNEVIIES</sequence>
<keyword id="KW-1015">Disulfide bond</keyword>
<keyword id="KW-0521">NADP</keyword>
<keyword id="KW-0560">Oxidoreductase</keyword>
<keyword id="KW-0611">Plant defense</keyword>
<keyword id="KW-1185">Reference proteome</keyword>
<dbReference type="EC" id="1.2.1.44"/>
<dbReference type="EMBL" id="AF320623">
    <property type="protein sequence ID" value="AAG53687.1"/>
    <property type="molecule type" value="mRNA"/>
</dbReference>
<dbReference type="EMBL" id="AC011713">
    <property type="protein sequence ID" value="AAF14669.1"/>
    <property type="molecule type" value="Genomic_DNA"/>
</dbReference>
<dbReference type="EMBL" id="CP002684">
    <property type="protein sequence ID" value="AEE36454.1"/>
    <property type="molecule type" value="Genomic_DNA"/>
</dbReference>
<dbReference type="EMBL" id="BT005826">
    <property type="protein sequence ID" value="AAO64761.1"/>
    <property type="molecule type" value="mRNA"/>
</dbReference>
<dbReference type="EMBL" id="AK227576">
    <property type="protein sequence ID" value="BAE99569.1"/>
    <property type="molecule type" value="mRNA"/>
</dbReference>
<dbReference type="EMBL" id="AY087148">
    <property type="protein sequence ID" value="AAM64706.1"/>
    <property type="molecule type" value="mRNA"/>
</dbReference>
<dbReference type="PIR" id="G96840">
    <property type="entry name" value="G96840"/>
</dbReference>
<dbReference type="RefSeq" id="NP_178197.1">
    <property type="nucleotide sequence ID" value="NM_106730.4"/>
</dbReference>
<dbReference type="SMR" id="Q9SAH9"/>
<dbReference type="FunCoup" id="Q9SAH9">
    <property type="interactions" value="255"/>
</dbReference>
<dbReference type="STRING" id="3702.Q9SAH9"/>
<dbReference type="PaxDb" id="3702-AT1G80820.1"/>
<dbReference type="ProteomicsDB" id="222793"/>
<dbReference type="DNASU" id="844421"/>
<dbReference type="EnsemblPlants" id="AT1G80820.1">
    <property type="protein sequence ID" value="AT1G80820.1"/>
    <property type="gene ID" value="AT1G80820"/>
</dbReference>
<dbReference type="GeneID" id="844421"/>
<dbReference type="Gramene" id="AT1G80820.1">
    <property type="protein sequence ID" value="AT1G80820.1"/>
    <property type="gene ID" value="AT1G80820"/>
</dbReference>
<dbReference type="KEGG" id="ath:AT1G80820"/>
<dbReference type="Araport" id="AT1G80820"/>
<dbReference type="TAIR" id="AT1G80820">
    <property type="gene designation" value="CCR2"/>
</dbReference>
<dbReference type="eggNOG" id="KOG1502">
    <property type="taxonomic scope" value="Eukaryota"/>
</dbReference>
<dbReference type="HOGENOM" id="CLU_007383_9_0_1"/>
<dbReference type="InParanoid" id="Q9SAH9"/>
<dbReference type="PhylomeDB" id="Q9SAH9"/>
<dbReference type="SABIO-RK" id="Q9SAH9"/>
<dbReference type="UniPathway" id="UPA00711"/>
<dbReference type="PRO" id="PR:Q9SAH9"/>
<dbReference type="Proteomes" id="UP000006548">
    <property type="component" value="Chromosome 1"/>
</dbReference>
<dbReference type="ExpressionAtlas" id="Q9SAH9">
    <property type="expression patterns" value="baseline and differential"/>
</dbReference>
<dbReference type="GO" id="GO:0016621">
    <property type="term" value="F:cinnamoyl-CoA reductase activity"/>
    <property type="evidence" value="ECO:0000314"/>
    <property type="project" value="TAIR"/>
</dbReference>
<dbReference type="GO" id="GO:0007623">
    <property type="term" value="P:circadian rhythm"/>
    <property type="evidence" value="ECO:0000270"/>
    <property type="project" value="UniProtKB"/>
</dbReference>
<dbReference type="GO" id="GO:0006952">
    <property type="term" value="P:defense response"/>
    <property type="evidence" value="ECO:0007669"/>
    <property type="project" value="UniProtKB-KW"/>
</dbReference>
<dbReference type="GO" id="GO:0042754">
    <property type="term" value="P:negative regulation of circadian rhythm"/>
    <property type="evidence" value="ECO:0000315"/>
    <property type="project" value="UniProtKB"/>
</dbReference>
<dbReference type="GO" id="GO:0009699">
    <property type="term" value="P:phenylpropanoid biosynthetic process"/>
    <property type="evidence" value="ECO:0007669"/>
    <property type="project" value="UniProtKB-UniPathway"/>
</dbReference>
<dbReference type="GO" id="GO:0009409">
    <property type="term" value="P:response to cold"/>
    <property type="evidence" value="ECO:0000270"/>
    <property type="project" value="TAIR"/>
</dbReference>
<dbReference type="CDD" id="cd08958">
    <property type="entry name" value="FR_SDR_e"/>
    <property type="match status" value="1"/>
</dbReference>
<dbReference type="FunFam" id="3.40.50.720:FF:000199">
    <property type="entry name" value="Cinnamoyl-CoA reductase 1"/>
    <property type="match status" value="1"/>
</dbReference>
<dbReference type="Gene3D" id="3.40.50.720">
    <property type="entry name" value="NAD(P)-binding Rossmann-like Domain"/>
    <property type="match status" value="1"/>
</dbReference>
<dbReference type="InterPro" id="IPR001509">
    <property type="entry name" value="Epimerase_deHydtase"/>
</dbReference>
<dbReference type="InterPro" id="IPR036291">
    <property type="entry name" value="NAD(P)-bd_dom_sf"/>
</dbReference>
<dbReference type="InterPro" id="IPR050425">
    <property type="entry name" value="NAD(P)_dehydrat-like"/>
</dbReference>
<dbReference type="PANTHER" id="PTHR10366:SF667">
    <property type="entry name" value="CINNAMOYL-COA REDUCTASE 2"/>
    <property type="match status" value="1"/>
</dbReference>
<dbReference type="PANTHER" id="PTHR10366">
    <property type="entry name" value="NAD DEPENDENT EPIMERASE/DEHYDRATASE"/>
    <property type="match status" value="1"/>
</dbReference>
<dbReference type="Pfam" id="PF01370">
    <property type="entry name" value="Epimerase"/>
    <property type="match status" value="1"/>
</dbReference>
<dbReference type="SUPFAM" id="SSF51735">
    <property type="entry name" value="NAD(P)-binding Rossmann-fold domains"/>
    <property type="match status" value="1"/>
</dbReference>